<reference key="1">
    <citation type="journal article" date="2008" name="PLoS Genet.">
        <title>Complete genome sequence of the N2-fixing broad host range endophyte Klebsiella pneumoniae 342 and virulence predictions verified in mice.</title>
        <authorList>
            <person name="Fouts D.E."/>
            <person name="Tyler H.L."/>
            <person name="DeBoy R.T."/>
            <person name="Daugherty S."/>
            <person name="Ren Q."/>
            <person name="Badger J.H."/>
            <person name="Durkin A.S."/>
            <person name="Huot H."/>
            <person name="Shrivastava S."/>
            <person name="Kothari S."/>
            <person name="Dodson R.J."/>
            <person name="Mohamoud Y."/>
            <person name="Khouri H."/>
            <person name="Roesch L.F.W."/>
            <person name="Krogfelt K.A."/>
            <person name="Struve C."/>
            <person name="Triplett E.W."/>
            <person name="Methe B.A."/>
        </authorList>
    </citation>
    <scope>NUCLEOTIDE SEQUENCE [LARGE SCALE GENOMIC DNA]</scope>
    <source>
        <strain>342</strain>
    </source>
</reference>
<dbReference type="EC" id="5.1.3.9" evidence="1"/>
<dbReference type="EMBL" id="CP000964">
    <property type="protein sequence ID" value="ACI10918.1"/>
    <property type="molecule type" value="Genomic_DNA"/>
</dbReference>
<dbReference type="SMR" id="B5XSS5"/>
<dbReference type="KEGG" id="kpe:KPK_0495"/>
<dbReference type="HOGENOM" id="CLU_086300_0_0_6"/>
<dbReference type="UniPathway" id="UPA00629">
    <property type="reaction ID" value="UER00682"/>
</dbReference>
<dbReference type="Proteomes" id="UP000001734">
    <property type="component" value="Chromosome"/>
</dbReference>
<dbReference type="GO" id="GO:0005829">
    <property type="term" value="C:cytosol"/>
    <property type="evidence" value="ECO:0007669"/>
    <property type="project" value="TreeGrafter"/>
</dbReference>
<dbReference type="GO" id="GO:0047465">
    <property type="term" value="F:N-acylglucosamine-6-phosphate 2-epimerase activity"/>
    <property type="evidence" value="ECO:0007669"/>
    <property type="project" value="UniProtKB-EC"/>
</dbReference>
<dbReference type="GO" id="GO:0005975">
    <property type="term" value="P:carbohydrate metabolic process"/>
    <property type="evidence" value="ECO:0007669"/>
    <property type="project" value="UniProtKB-UniRule"/>
</dbReference>
<dbReference type="GO" id="GO:0006053">
    <property type="term" value="P:N-acetylmannosamine catabolic process"/>
    <property type="evidence" value="ECO:0007669"/>
    <property type="project" value="TreeGrafter"/>
</dbReference>
<dbReference type="GO" id="GO:0019262">
    <property type="term" value="P:N-acetylneuraminate catabolic process"/>
    <property type="evidence" value="ECO:0007669"/>
    <property type="project" value="UniProtKB-UniRule"/>
</dbReference>
<dbReference type="CDD" id="cd04729">
    <property type="entry name" value="NanE"/>
    <property type="match status" value="1"/>
</dbReference>
<dbReference type="FunFam" id="3.20.20.70:FF:000035">
    <property type="entry name" value="Putative N-acetylmannosamine-6-phosphate 2-epimerase"/>
    <property type="match status" value="1"/>
</dbReference>
<dbReference type="Gene3D" id="3.20.20.70">
    <property type="entry name" value="Aldolase class I"/>
    <property type="match status" value="1"/>
</dbReference>
<dbReference type="HAMAP" id="MF_01235">
    <property type="entry name" value="ManNAc6P_epimer"/>
    <property type="match status" value="1"/>
</dbReference>
<dbReference type="InterPro" id="IPR013785">
    <property type="entry name" value="Aldolase_TIM"/>
</dbReference>
<dbReference type="InterPro" id="IPR007260">
    <property type="entry name" value="NanE"/>
</dbReference>
<dbReference type="InterPro" id="IPR011060">
    <property type="entry name" value="RibuloseP-bd_barrel"/>
</dbReference>
<dbReference type="NCBIfam" id="NF002231">
    <property type="entry name" value="PRK01130.1"/>
    <property type="match status" value="1"/>
</dbReference>
<dbReference type="PANTHER" id="PTHR36204">
    <property type="entry name" value="N-ACETYLMANNOSAMINE-6-PHOSPHATE 2-EPIMERASE-RELATED"/>
    <property type="match status" value="1"/>
</dbReference>
<dbReference type="PANTHER" id="PTHR36204:SF1">
    <property type="entry name" value="N-ACETYLMANNOSAMINE-6-PHOSPHATE 2-EPIMERASE-RELATED"/>
    <property type="match status" value="1"/>
</dbReference>
<dbReference type="Pfam" id="PF04131">
    <property type="entry name" value="NanE"/>
    <property type="match status" value="1"/>
</dbReference>
<dbReference type="SUPFAM" id="SSF51366">
    <property type="entry name" value="Ribulose-phoshate binding barrel"/>
    <property type="match status" value="1"/>
</dbReference>
<gene>
    <name evidence="1" type="primary">nanE</name>
    <name type="ordered locus">KPK_0495</name>
</gene>
<organism>
    <name type="scientific">Klebsiella pneumoniae (strain 342)</name>
    <dbReference type="NCBI Taxonomy" id="507522"/>
    <lineage>
        <taxon>Bacteria</taxon>
        <taxon>Pseudomonadati</taxon>
        <taxon>Pseudomonadota</taxon>
        <taxon>Gammaproteobacteria</taxon>
        <taxon>Enterobacterales</taxon>
        <taxon>Enterobacteriaceae</taxon>
        <taxon>Klebsiella/Raoultella group</taxon>
        <taxon>Klebsiella</taxon>
        <taxon>Klebsiella pneumoniae complex</taxon>
    </lineage>
</organism>
<sequence>MSLLAQLDRRIRYYGGLIVSCQPVPGSPLDNPAIVAAMALAAEQAGAVALRIEGLANLQAVRPLVTVPVIALIKRDLHDSPVRITPWLEDVNALAQAGADIIAVDGTRRQRPASVASLLAAIHRQGKNAMADCSSLDDALECWQLGFDMVGTTLSGYTAEGTPVEPDLALVKSLSAAGCRVVAEGRYNTPAQAAEAMRCGAWAVTVGSAITRLEHICGWYNSALKAAVCPANEQ</sequence>
<proteinExistence type="inferred from homology"/>
<accession>B5XSS5</accession>
<keyword id="KW-0119">Carbohydrate metabolism</keyword>
<keyword id="KW-0413">Isomerase</keyword>
<name>NANE_KLEP3</name>
<evidence type="ECO:0000255" key="1">
    <source>
        <dbReference type="HAMAP-Rule" id="MF_01235"/>
    </source>
</evidence>
<feature type="chain" id="PRO_1000139712" description="Putative N-acetylmannosamine-6-phosphate 2-epimerase">
    <location>
        <begin position="1"/>
        <end position="234"/>
    </location>
</feature>
<comment type="function">
    <text evidence="1">Converts N-acetylmannosamine-6-phosphate (ManNAc-6-P) to N-acetylglucosamine-6-phosphate (GlcNAc-6-P).</text>
</comment>
<comment type="catalytic activity">
    <reaction evidence="1">
        <text>an N-acyl-D-glucosamine 6-phosphate = an N-acyl-D-mannosamine 6-phosphate</text>
        <dbReference type="Rhea" id="RHEA:23932"/>
        <dbReference type="ChEBI" id="CHEBI:57599"/>
        <dbReference type="ChEBI" id="CHEBI:57666"/>
        <dbReference type="EC" id="5.1.3.9"/>
    </reaction>
</comment>
<comment type="pathway">
    <text evidence="1">Amino-sugar metabolism; N-acetylneuraminate degradation; D-fructose 6-phosphate from N-acetylneuraminate: step 3/5.</text>
</comment>
<comment type="similarity">
    <text evidence="1">Belongs to the NanE family.</text>
</comment>
<protein>
    <recommendedName>
        <fullName evidence="1">Putative N-acetylmannosamine-6-phosphate 2-epimerase</fullName>
        <ecNumber evidence="1">5.1.3.9</ecNumber>
    </recommendedName>
    <alternativeName>
        <fullName evidence="1">ManNAc-6-P epimerase</fullName>
    </alternativeName>
</protein>